<accession>B7NK85</accession>
<sequence>MTLPSGHPKSRLIKKFTALGPYIREGKCEDNRFFFDCLAVCVNVKPAPEVREFWGWWMELEAQESRFTYSYQFGLFDKAGDWTSVPVKDTEVVERLEHTLREFHEKLRELLATLNLKLEPADDFRDEPVKLTA</sequence>
<dbReference type="EMBL" id="CU928164">
    <property type="protein sequence ID" value="CAR16550.1"/>
    <property type="molecule type" value="Genomic_DNA"/>
</dbReference>
<dbReference type="RefSeq" id="WP_000174682.1">
    <property type="nucleotide sequence ID" value="NC_011750.1"/>
</dbReference>
<dbReference type="RefSeq" id="YP_002406445.1">
    <property type="nucleotide sequence ID" value="NC_011750.1"/>
</dbReference>
<dbReference type="SMR" id="B7NK85"/>
<dbReference type="STRING" id="585057.ECIAI39_0411"/>
<dbReference type="KEGG" id="ect:ECIAI39_0411"/>
<dbReference type="PATRIC" id="fig|585057.6.peg.441"/>
<dbReference type="HOGENOM" id="CLU_136773_0_0_6"/>
<dbReference type="Proteomes" id="UP000000749">
    <property type="component" value="Chromosome"/>
</dbReference>
<dbReference type="GO" id="GO:0005737">
    <property type="term" value="C:cytoplasm"/>
    <property type="evidence" value="ECO:0007669"/>
    <property type="project" value="UniProtKB-SubCell"/>
</dbReference>
<dbReference type="GO" id="GO:0045893">
    <property type="term" value="P:positive regulation of DNA-templated transcription"/>
    <property type="evidence" value="ECO:0007669"/>
    <property type="project" value="UniProtKB-UniRule"/>
</dbReference>
<dbReference type="FunFam" id="3.30.310.230:FF:000001">
    <property type="entry name" value="Sigma factor-binding protein Crl"/>
    <property type="match status" value="1"/>
</dbReference>
<dbReference type="Gene3D" id="3.30.310.230">
    <property type="entry name" value="Sigma factor-binding protein Crl monomer"/>
    <property type="match status" value="1"/>
</dbReference>
<dbReference type="HAMAP" id="MF_01178">
    <property type="entry name" value="Crl"/>
    <property type="match status" value="1"/>
</dbReference>
<dbReference type="InterPro" id="IPR009986">
    <property type="entry name" value="Tscrpt_reg_Crl"/>
</dbReference>
<dbReference type="InterPro" id="IPR038208">
    <property type="entry name" value="Tscrpt_reg_Crl_sf"/>
</dbReference>
<dbReference type="NCBIfam" id="NF008217">
    <property type="entry name" value="PRK10984.1"/>
    <property type="match status" value="1"/>
</dbReference>
<dbReference type="Pfam" id="PF07417">
    <property type="entry name" value="Crl"/>
    <property type="match status" value="1"/>
</dbReference>
<comment type="function">
    <text evidence="1">Binds to the sigma-S subunit of RNA polymerase, activating expression of sigma-S-regulated genes. Stimulates RNA polymerase holoenzyme formation and may bind to several other sigma factors, such as sigma-70 and sigma-32.</text>
</comment>
<comment type="subcellular location">
    <subcellularLocation>
        <location evidence="1">Cytoplasm</location>
    </subcellularLocation>
</comment>
<comment type="similarity">
    <text evidence="1">Belongs to the Crl family.</text>
</comment>
<feature type="chain" id="PRO_1000138136" description="Sigma factor-binding protein Crl">
    <location>
        <begin position="1"/>
        <end position="133"/>
    </location>
</feature>
<feature type="region of interest" description="Essential for activity" evidence="1">
    <location>
        <begin position="99"/>
        <end position="122"/>
    </location>
</feature>
<feature type="coiled-coil region" evidence="1">
    <location>
        <begin position="90"/>
        <end position="116"/>
    </location>
</feature>
<organism>
    <name type="scientific">Escherichia coli O7:K1 (strain IAI39 / ExPEC)</name>
    <dbReference type="NCBI Taxonomy" id="585057"/>
    <lineage>
        <taxon>Bacteria</taxon>
        <taxon>Pseudomonadati</taxon>
        <taxon>Pseudomonadota</taxon>
        <taxon>Gammaproteobacteria</taxon>
        <taxon>Enterobacterales</taxon>
        <taxon>Enterobacteriaceae</taxon>
        <taxon>Escherichia</taxon>
    </lineage>
</organism>
<reference key="1">
    <citation type="journal article" date="2009" name="PLoS Genet.">
        <title>Organised genome dynamics in the Escherichia coli species results in highly diverse adaptive paths.</title>
        <authorList>
            <person name="Touchon M."/>
            <person name="Hoede C."/>
            <person name="Tenaillon O."/>
            <person name="Barbe V."/>
            <person name="Baeriswyl S."/>
            <person name="Bidet P."/>
            <person name="Bingen E."/>
            <person name="Bonacorsi S."/>
            <person name="Bouchier C."/>
            <person name="Bouvet O."/>
            <person name="Calteau A."/>
            <person name="Chiapello H."/>
            <person name="Clermont O."/>
            <person name="Cruveiller S."/>
            <person name="Danchin A."/>
            <person name="Diard M."/>
            <person name="Dossat C."/>
            <person name="Karoui M.E."/>
            <person name="Frapy E."/>
            <person name="Garry L."/>
            <person name="Ghigo J.M."/>
            <person name="Gilles A.M."/>
            <person name="Johnson J."/>
            <person name="Le Bouguenec C."/>
            <person name="Lescat M."/>
            <person name="Mangenot S."/>
            <person name="Martinez-Jehanne V."/>
            <person name="Matic I."/>
            <person name="Nassif X."/>
            <person name="Oztas S."/>
            <person name="Petit M.A."/>
            <person name="Pichon C."/>
            <person name="Rouy Z."/>
            <person name="Ruf C.S."/>
            <person name="Schneider D."/>
            <person name="Tourret J."/>
            <person name="Vacherie B."/>
            <person name="Vallenet D."/>
            <person name="Medigue C."/>
            <person name="Rocha E.P.C."/>
            <person name="Denamur E."/>
        </authorList>
    </citation>
    <scope>NUCLEOTIDE SEQUENCE [LARGE SCALE GENOMIC DNA]</scope>
    <source>
        <strain>IAI39 / ExPEC</strain>
    </source>
</reference>
<name>CRL_ECO7I</name>
<proteinExistence type="inferred from homology"/>
<keyword id="KW-0010">Activator</keyword>
<keyword id="KW-0175">Coiled coil</keyword>
<keyword id="KW-0963">Cytoplasm</keyword>
<keyword id="KW-0804">Transcription</keyword>
<keyword id="KW-0805">Transcription regulation</keyword>
<evidence type="ECO:0000255" key="1">
    <source>
        <dbReference type="HAMAP-Rule" id="MF_01178"/>
    </source>
</evidence>
<gene>
    <name evidence="1" type="primary">crl</name>
    <name type="ordered locus">ECIAI39_0411</name>
</gene>
<protein>
    <recommendedName>
        <fullName evidence="1">Sigma factor-binding protein Crl</fullName>
    </recommendedName>
</protein>